<feature type="chain" id="PRO_0000336792" description="ATP-dependent protease subunit HslV">
    <location>
        <begin position="1"/>
        <end position="185"/>
    </location>
</feature>
<feature type="active site" evidence="1">
    <location>
        <position position="12"/>
    </location>
</feature>
<feature type="binding site" evidence="1">
    <location>
        <position position="168"/>
    </location>
    <ligand>
        <name>Na(+)</name>
        <dbReference type="ChEBI" id="CHEBI:29101"/>
    </ligand>
</feature>
<feature type="binding site" evidence="1">
    <location>
        <position position="171"/>
    </location>
    <ligand>
        <name>Na(+)</name>
        <dbReference type="ChEBI" id="CHEBI:29101"/>
    </ligand>
</feature>
<feature type="binding site" evidence="1">
    <location>
        <position position="174"/>
    </location>
    <ligand>
        <name>Na(+)</name>
        <dbReference type="ChEBI" id="CHEBI:29101"/>
    </ligand>
</feature>
<evidence type="ECO:0000255" key="1">
    <source>
        <dbReference type="HAMAP-Rule" id="MF_00248"/>
    </source>
</evidence>
<keyword id="KW-0021">Allosteric enzyme</keyword>
<keyword id="KW-0963">Cytoplasm</keyword>
<keyword id="KW-0378">Hydrolase</keyword>
<keyword id="KW-0479">Metal-binding</keyword>
<keyword id="KW-0645">Protease</keyword>
<keyword id="KW-0915">Sodium</keyword>
<keyword id="KW-0888">Threonine protease</keyword>
<name>HSLV_CERS1</name>
<comment type="function">
    <text evidence="1">Protease subunit of a proteasome-like degradation complex believed to be a general protein degrading machinery.</text>
</comment>
<comment type="catalytic activity">
    <reaction evidence="1">
        <text>ATP-dependent cleavage of peptide bonds with broad specificity.</text>
        <dbReference type="EC" id="3.4.25.2"/>
    </reaction>
</comment>
<comment type="activity regulation">
    <text evidence="1">Allosterically activated by HslU binding.</text>
</comment>
<comment type="subunit">
    <text evidence="1">A double ring-shaped homohexamer of HslV is capped on each side by a ring-shaped HslU homohexamer. The assembly of the HslU/HslV complex is dependent on binding of ATP.</text>
</comment>
<comment type="subcellular location">
    <subcellularLocation>
        <location evidence="1">Cytoplasm</location>
    </subcellularLocation>
</comment>
<comment type="similarity">
    <text evidence="1">Belongs to the peptidase T1B family. HslV subfamily.</text>
</comment>
<organism>
    <name type="scientific">Cereibacter sphaeroides (strain ATCC 17029 / ATH 2.4.9)</name>
    <name type="common">Rhodobacter sphaeroides</name>
    <dbReference type="NCBI Taxonomy" id="349101"/>
    <lineage>
        <taxon>Bacteria</taxon>
        <taxon>Pseudomonadati</taxon>
        <taxon>Pseudomonadota</taxon>
        <taxon>Alphaproteobacteria</taxon>
        <taxon>Rhodobacterales</taxon>
        <taxon>Paracoccaceae</taxon>
        <taxon>Cereibacter</taxon>
    </lineage>
</organism>
<reference key="1">
    <citation type="submission" date="2007-02" db="EMBL/GenBank/DDBJ databases">
        <title>Complete sequence of chromosome 1 of Rhodobacter sphaeroides ATCC 17029.</title>
        <authorList>
            <person name="Copeland A."/>
            <person name="Lucas S."/>
            <person name="Lapidus A."/>
            <person name="Barry K."/>
            <person name="Detter J.C."/>
            <person name="Glavina del Rio T."/>
            <person name="Hammon N."/>
            <person name="Israni S."/>
            <person name="Dalin E."/>
            <person name="Tice H."/>
            <person name="Pitluck S."/>
            <person name="Kiss H."/>
            <person name="Brettin T."/>
            <person name="Bruce D."/>
            <person name="Han C."/>
            <person name="Tapia R."/>
            <person name="Gilna P."/>
            <person name="Schmutz J."/>
            <person name="Larimer F."/>
            <person name="Land M."/>
            <person name="Hauser L."/>
            <person name="Kyrpides N."/>
            <person name="Mikhailova N."/>
            <person name="Richardson P."/>
            <person name="Mackenzie C."/>
            <person name="Choudhary M."/>
            <person name="Donohue T.J."/>
            <person name="Kaplan S."/>
        </authorList>
    </citation>
    <scope>NUCLEOTIDE SEQUENCE [LARGE SCALE GENOMIC DNA]</scope>
    <source>
        <strain>ATCC 17029 / ATH 2.4.9</strain>
    </source>
</reference>
<dbReference type="EC" id="3.4.25.2" evidence="1"/>
<dbReference type="EMBL" id="CP000577">
    <property type="protein sequence ID" value="ABN75300.1"/>
    <property type="molecule type" value="Genomic_DNA"/>
</dbReference>
<dbReference type="RefSeq" id="WP_011840220.1">
    <property type="nucleotide sequence ID" value="NC_009049.1"/>
</dbReference>
<dbReference type="SMR" id="A3PG34"/>
<dbReference type="MEROPS" id="T01.006"/>
<dbReference type="KEGG" id="rsh:Rsph17029_0181"/>
<dbReference type="HOGENOM" id="CLU_093872_1_0_5"/>
<dbReference type="GO" id="GO:0009376">
    <property type="term" value="C:HslUV protease complex"/>
    <property type="evidence" value="ECO:0007669"/>
    <property type="project" value="UniProtKB-UniRule"/>
</dbReference>
<dbReference type="GO" id="GO:0005839">
    <property type="term" value="C:proteasome core complex"/>
    <property type="evidence" value="ECO:0007669"/>
    <property type="project" value="InterPro"/>
</dbReference>
<dbReference type="GO" id="GO:0046872">
    <property type="term" value="F:metal ion binding"/>
    <property type="evidence" value="ECO:0007669"/>
    <property type="project" value="UniProtKB-KW"/>
</dbReference>
<dbReference type="GO" id="GO:0004298">
    <property type="term" value="F:threonine-type endopeptidase activity"/>
    <property type="evidence" value="ECO:0007669"/>
    <property type="project" value="UniProtKB-KW"/>
</dbReference>
<dbReference type="GO" id="GO:0051603">
    <property type="term" value="P:proteolysis involved in protein catabolic process"/>
    <property type="evidence" value="ECO:0007669"/>
    <property type="project" value="InterPro"/>
</dbReference>
<dbReference type="CDD" id="cd01913">
    <property type="entry name" value="protease_HslV"/>
    <property type="match status" value="1"/>
</dbReference>
<dbReference type="Gene3D" id="3.60.20.10">
    <property type="entry name" value="Glutamine Phosphoribosylpyrophosphate, subunit 1, domain 1"/>
    <property type="match status" value="1"/>
</dbReference>
<dbReference type="HAMAP" id="MF_00248">
    <property type="entry name" value="HslV"/>
    <property type="match status" value="1"/>
</dbReference>
<dbReference type="InterPro" id="IPR022281">
    <property type="entry name" value="ATP-dep_Prtase_HsIV_su"/>
</dbReference>
<dbReference type="InterPro" id="IPR029055">
    <property type="entry name" value="Ntn_hydrolases_N"/>
</dbReference>
<dbReference type="InterPro" id="IPR001353">
    <property type="entry name" value="Proteasome_sua/b"/>
</dbReference>
<dbReference type="InterPro" id="IPR023333">
    <property type="entry name" value="Proteasome_suB-type"/>
</dbReference>
<dbReference type="NCBIfam" id="TIGR03692">
    <property type="entry name" value="ATP_dep_HslV"/>
    <property type="match status" value="1"/>
</dbReference>
<dbReference type="NCBIfam" id="NF003964">
    <property type="entry name" value="PRK05456.1"/>
    <property type="match status" value="1"/>
</dbReference>
<dbReference type="PANTHER" id="PTHR32194:SF7">
    <property type="entry name" value="ATP-DEPENDENT PROTEASE SUBUNIT HSLV"/>
    <property type="match status" value="1"/>
</dbReference>
<dbReference type="PANTHER" id="PTHR32194">
    <property type="entry name" value="METALLOPROTEASE TLDD"/>
    <property type="match status" value="1"/>
</dbReference>
<dbReference type="Pfam" id="PF00227">
    <property type="entry name" value="Proteasome"/>
    <property type="match status" value="1"/>
</dbReference>
<dbReference type="PIRSF" id="PIRSF039093">
    <property type="entry name" value="HslV"/>
    <property type="match status" value="1"/>
</dbReference>
<dbReference type="SUPFAM" id="SSF56235">
    <property type="entry name" value="N-terminal nucleophile aminohydrolases (Ntn hydrolases)"/>
    <property type="match status" value="1"/>
</dbReference>
<dbReference type="PROSITE" id="PS51476">
    <property type="entry name" value="PROTEASOME_BETA_2"/>
    <property type="match status" value="1"/>
</dbReference>
<sequence>MAEDRFPGWHGTTILAVRRGGEVVVAGDGQVSLGQTVIKGTARKVRRLSPGGHEVVAGFAGSTADAFTLLERLEKKLEAAPGQLARACVQLAKDWRMDKYLRNLEAMLIVTDGETLLVLTGAGDVLEPEHDVTAIGSGGNFALAAARGLMATDLPAEEIARKAMAIAADICVYTNGNLTVERISK</sequence>
<protein>
    <recommendedName>
        <fullName evidence="1">ATP-dependent protease subunit HslV</fullName>
        <ecNumber evidence="1">3.4.25.2</ecNumber>
    </recommendedName>
</protein>
<accession>A3PG34</accession>
<gene>
    <name evidence="1" type="primary">hslV</name>
    <name type="ordered locus">Rsph17029_0181</name>
</gene>
<proteinExistence type="inferred from homology"/>